<organism>
    <name type="scientific">Nitratidesulfovibrio vulgaris (strain DP4)</name>
    <name type="common">Desulfovibrio vulgaris</name>
    <dbReference type="NCBI Taxonomy" id="391774"/>
    <lineage>
        <taxon>Bacteria</taxon>
        <taxon>Pseudomonadati</taxon>
        <taxon>Thermodesulfobacteriota</taxon>
        <taxon>Desulfovibrionia</taxon>
        <taxon>Desulfovibrionales</taxon>
        <taxon>Desulfovibrionaceae</taxon>
        <taxon>Nitratidesulfovibrio</taxon>
    </lineage>
</organism>
<reference key="1">
    <citation type="journal article" date="2009" name="Environ. Microbiol.">
        <title>Contribution of mobile genetic elements to Desulfovibrio vulgaris genome plasticity.</title>
        <authorList>
            <person name="Walker C.B."/>
            <person name="Stolyar S."/>
            <person name="Chivian D."/>
            <person name="Pinel N."/>
            <person name="Gabster J.A."/>
            <person name="Dehal P.S."/>
            <person name="He Z."/>
            <person name="Yang Z.K."/>
            <person name="Yen H.C."/>
            <person name="Zhou J."/>
            <person name="Wall J.D."/>
            <person name="Hazen T.C."/>
            <person name="Arkin A.P."/>
            <person name="Stahl D.A."/>
        </authorList>
    </citation>
    <scope>NUCLEOTIDE SEQUENCE [LARGE SCALE GENOMIC DNA]</scope>
    <source>
        <strain>DP4</strain>
    </source>
</reference>
<proteinExistence type="inferred from homology"/>
<protein>
    <recommendedName>
        <fullName evidence="1">Nucleotide-binding protein Dvul_1502</fullName>
    </recommendedName>
</protein>
<gene>
    <name type="ordered locus">Dvul_1502</name>
</gene>
<comment type="function">
    <text evidence="1">Displays ATPase and GTPase activities.</text>
</comment>
<comment type="similarity">
    <text evidence="1">Belongs to the RapZ-like family.</text>
</comment>
<evidence type="ECO:0000255" key="1">
    <source>
        <dbReference type="HAMAP-Rule" id="MF_00636"/>
    </source>
</evidence>
<accession>A1VDK3</accession>
<name>Y1502_NITV4</name>
<sequence>MSSPARSADDGFEAGFPVLIVSGLSGAGKSTVLNVFEDLRYFTVDGLPVRLAPDMVRVLDAQALEQYQGIVLGMDLREAEFVQQFEQALARLQEMGVRPVLLFIEAEQGELMRRYATTRRPHPLESEGMGLELALAEERRRLAPVREAADLVFDTTSFSIHDLRRVIQRRWSSLKGRMRSLRVNIISFGYKYGVPKEADLVFDLRFLPNPYFDTSLRPQSGLDAPVVEYVFGTDSARTFRDRFIDFMTYLLPLYEAEGRYRIAVAIGCTGGRHRSVATAEALLDVLRKSDYAVTIEHRHLELG</sequence>
<keyword id="KW-0067">ATP-binding</keyword>
<keyword id="KW-0342">GTP-binding</keyword>
<keyword id="KW-0547">Nucleotide-binding</keyword>
<dbReference type="EMBL" id="CP000527">
    <property type="protein sequence ID" value="ABM28519.1"/>
    <property type="molecule type" value="Genomic_DNA"/>
</dbReference>
<dbReference type="SMR" id="A1VDK3"/>
<dbReference type="KEGG" id="dvl:Dvul_1502"/>
<dbReference type="HOGENOM" id="CLU_059558_0_0_7"/>
<dbReference type="Proteomes" id="UP000009173">
    <property type="component" value="Chromosome"/>
</dbReference>
<dbReference type="GO" id="GO:0005524">
    <property type="term" value="F:ATP binding"/>
    <property type="evidence" value="ECO:0007669"/>
    <property type="project" value="UniProtKB-UniRule"/>
</dbReference>
<dbReference type="GO" id="GO:0005525">
    <property type="term" value="F:GTP binding"/>
    <property type="evidence" value="ECO:0007669"/>
    <property type="project" value="UniProtKB-UniRule"/>
</dbReference>
<dbReference type="HAMAP" id="MF_00636">
    <property type="entry name" value="RapZ_like"/>
    <property type="match status" value="1"/>
</dbReference>
<dbReference type="InterPro" id="IPR027417">
    <property type="entry name" value="P-loop_NTPase"/>
</dbReference>
<dbReference type="InterPro" id="IPR005337">
    <property type="entry name" value="RapZ-like"/>
</dbReference>
<dbReference type="InterPro" id="IPR053930">
    <property type="entry name" value="RapZ-like_N"/>
</dbReference>
<dbReference type="InterPro" id="IPR053931">
    <property type="entry name" value="RapZ_C"/>
</dbReference>
<dbReference type="NCBIfam" id="NF003828">
    <property type="entry name" value="PRK05416.1"/>
    <property type="match status" value="1"/>
</dbReference>
<dbReference type="PANTHER" id="PTHR30448">
    <property type="entry name" value="RNASE ADAPTER PROTEIN RAPZ"/>
    <property type="match status" value="1"/>
</dbReference>
<dbReference type="PANTHER" id="PTHR30448:SF0">
    <property type="entry name" value="RNASE ADAPTER PROTEIN RAPZ"/>
    <property type="match status" value="1"/>
</dbReference>
<dbReference type="Pfam" id="PF22740">
    <property type="entry name" value="PapZ_C"/>
    <property type="match status" value="1"/>
</dbReference>
<dbReference type="Pfam" id="PF03668">
    <property type="entry name" value="RapZ-like_N"/>
    <property type="match status" value="1"/>
</dbReference>
<dbReference type="PIRSF" id="PIRSF005052">
    <property type="entry name" value="P-loopkin"/>
    <property type="match status" value="1"/>
</dbReference>
<dbReference type="SUPFAM" id="SSF52540">
    <property type="entry name" value="P-loop containing nucleoside triphosphate hydrolases"/>
    <property type="match status" value="1"/>
</dbReference>
<feature type="chain" id="PRO_1000056820" description="Nucleotide-binding protein Dvul_1502">
    <location>
        <begin position="1"/>
        <end position="303"/>
    </location>
</feature>
<feature type="binding site" evidence="1">
    <location>
        <begin position="23"/>
        <end position="30"/>
    </location>
    <ligand>
        <name>ATP</name>
        <dbReference type="ChEBI" id="CHEBI:30616"/>
    </ligand>
</feature>
<feature type="binding site" evidence="1">
    <location>
        <begin position="75"/>
        <end position="78"/>
    </location>
    <ligand>
        <name>GTP</name>
        <dbReference type="ChEBI" id="CHEBI:37565"/>
    </ligand>
</feature>